<dbReference type="EC" id="2.6.1.2"/>
<dbReference type="EMBL" id="BX928742">
    <property type="protein sequence ID" value="CAM14165.1"/>
    <property type="status" value="ALT_SEQ"/>
    <property type="molecule type" value="Genomic_DNA"/>
</dbReference>
<dbReference type="EMBL" id="BC061955">
    <property type="protein sequence ID" value="AAH61955.1"/>
    <property type="molecule type" value="mRNA"/>
</dbReference>
<dbReference type="EMBL" id="BC066543">
    <property type="protein sequence ID" value="AAH66543.1"/>
    <property type="molecule type" value="mRNA"/>
</dbReference>
<dbReference type="RefSeq" id="XP_017213488.1">
    <molecule id="Q6NYL5-1"/>
    <property type="nucleotide sequence ID" value="XM_017357999.1"/>
</dbReference>
<dbReference type="SMR" id="Q6NYL5"/>
<dbReference type="FunCoup" id="Q6NYL5">
    <property type="interactions" value="1631"/>
</dbReference>
<dbReference type="STRING" id="7955.ENSDARP00000121415"/>
<dbReference type="PaxDb" id="7955-ENSDARP00000121415"/>
<dbReference type="GeneID" id="403086"/>
<dbReference type="AGR" id="ZFIN:ZDB-GENE-050302-11"/>
<dbReference type="CTD" id="2875"/>
<dbReference type="ZFIN" id="ZDB-GENE-050302-11">
    <property type="gene designation" value="gpt"/>
</dbReference>
<dbReference type="eggNOG" id="KOG0258">
    <property type="taxonomic scope" value="Eukaryota"/>
</dbReference>
<dbReference type="InParanoid" id="Q6NYL5"/>
<dbReference type="OrthoDB" id="1732682at2759"/>
<dbReference type="PhylomeDB" id="Q6NYL5"/>
<dbReference type="UniPathway" id="UPA00528">
    <property type="reaction ID" value="UER00586"/>
</dbReference>
<dbReference type="PRO" id="PR:Q6NYL5"/>
<dbReference type="Proteomes" id="UP000000437">
    <property type="component" value="Chromosome 2"/>
</dbReference>
<dbReference type="GO" id="GO:0004021">
    <property type="term" value="F:L-alanine:2-oxoglutarate aminotransferase activity"/>
    <property type="evidence" value="ECO:0000250"/>
    <property type="project" value="UniProtKB"/>
</dbReference>
<dbReference type="GO" id="GO:0030170">
    <property type="term" value="F:pyridoxal phosphate binding"/>
    <property type="evidence" value="ECO:0007669"/>
    <property type="project" value="InterPro"/>
</dbReference>
<dbReference type="GO" id="GO:0006103">
    <property type="term" value="P:2-oxoglutarate metabolic process"/>
    <property type="evidence" value="ECO:0000250"/>
    <property type="project" value="UniProtKB"/>
</dbReference>
<dbReference type="GO" id="GO:0009058">
    <property type="term" value="P:biosynthetic process"/>
    <property type="evidence" value="ECO:0007669"/>
    <property type="project" value="InterPro"/>
</dbReference>
<dbReference type="GO" id="GO:0042853">
    <property type="term" value="P:L-alanine catabolic process"/>
    <property type="evidence" value="ECO:0007669"/>
    <property type="project" value="UniProtKB-UniPathway"/>
</dbReference>
<dbReference type="GO" id="GO:0042851">
    <property type="term" value="P:L-alanine metabolic process"/>
    <property type="evidence" value="ECO:0000250"/>
    <property type="project" value="UniProtKB"/>
</dbReference>
<dbReference type="CDD" id="cd00609">
    <property type="entry name" value="AAT_like"/>
    <property type="match status" value="1"/>
</dbReference>
<dbReference type="FunFam" id="1.10.287.1970:FF:000001">
    <property type="entry name" value="Alanine aminotransferase 2"/>
    <property type="match status" value="1"/>
</dbReference>
<dbReference type="FunFam" id="3.40.640.10:FF:000226">
    <property type="entry name" value="Alanine aminotransferase 2"/>
    <property type="match status" value="1"/>
</dbReference>
<dbReference type="FunFam" id="3.90.1150.10:FF:000345">
    <property type="entry name" value="Alanine aminotransferase 2"/>
    <property type="match status" value="1"/>
</dbReference>
<dbReference type="Gene3D" id="1.10.287.1970">
    <property type="match status" value="1"/>
</dbReference>
<dbReference type="Gene3D" id="3.90.1150.10">
    <property type="entry name" value="Aspartate Aminotransferase, domain 1"/>
    <property type="match status" value="1"/>
</dbReference>
<dbReference type="Gene3D" id="3.40.640.10">
    <property type="entry name" value="Type I PLP-dependent aspartate aminotransferase-like (Major domain)"/>
    <property type="match status" value="1"/>
</dbReference>
<dbReference type="InterPro" id="IPR045088">
    <property type="entry name" value="ALAT1/2-like"/>
</dbReference>
<dbReference type="InterPro" id="IPR004839">
    <property type="entry name" value="Aminotransferase_I/II_large"/>
</dbReference>
<dbReference type="InterPro" id="IPR015424">
    <property type="entry name" value="PyrdxlP-dep_Trfase"/>
</dbReference>
<dbReference type="InterPro" id="IPR015421">
    <property type="entry name" value="PyrdxlP-dep_Trfase_major"/>
</dbReference>
<dbReference type="InterPro" id="IPR015422">
    <property type="entry name" value="PyrdxlP-dep_Trfase_small"/>
</dbReference>
<dbReference type="PANTHER" id="PTHR11751">
    <property type="entry name" value="ALANINE AMINOTRANSFERASE"/>
    <property type="match status" value="1"/>
</dbReference>
<dbReference type="PANTHER" id="PTHR11751:SF308">
    <property type="entry name" value="ALANINE AMINOTRANSFERASE 1"/>
    <property type="match status" value="1"/>
</dbReference>
<dbReference type="Pfam" id="PF00155">
    <property type="entry name" value="Aminotran_1_2"/>
    <property type="match status" value="1"/>
</dbReference>
<dbReference type="SUPFAM" id="SSF53383">
    <property type="entry name" value="PLP-dependent transferases"/>
    <property type="match status" value="1"/>
</dbReference>
<keyword id="KW-0025">Alternative splicing</keyword>
<keyword id="KW-0032">Aminotransferase</keyword>
<keyword id="KW-0663">Pyridoxal phosphate</keyword>
<keyword id="KW-1185">Reference proteome</keyword>
<keyword id="KW-0808">Transferase</keyword>
<comment type="function">
    <text evidence="1">Catalyzes the reversible transamination between alanine and 2-oxoglutarate to form pyruvate and glutamate.</text>
</comment>
<comment type="catalytic activity">
    <reaction>
        <text>L-alanine + 2-oxoglutarate = pyruvate + L-glutamate</text>
        <dbReference type="Rhea" id="RHEA:19453"/>
        <dbReference type="ChEBI" id="CHEBI:15361"/>
        <dbReference type="ChEBI" id="CHEBI:16810"/>
        <dbReference type="ChEBI" id="CHEBI:29985"/>
        <dbReference type="ChEBI" id="CHEBI:57972"/>
        <dbReference type="EC" id="2.6.1.2"/>
    </reaction>
</comment>
<comment type="cofactor">
    <cofactor evidence="1">
        <name>pyridoxal 5'-phosphate</name>
        <dbReference type="ChEBI" id="CHEBI:597326"/>
    </cofactor>
</comment>
<comment type="pathway">
    <text>Amino-acid degradation; L-alanine degradation via transaminase pathway; pyruvate from L-alanine: step 1/1.</text>
</comment>
<comment type="subunit">
    <text evidence="1">Homodimer.</text>
</comment>
<comment type="alternative products">
    <event type="alternative splicing"/>
    <isoform>
        <id>Q6NYL5-1</id>
        <name>1</name>
        <sequence type="displayed"/>
    </isoform>
    <isoform>
        <id>Q6NYL5-2</id>
        <name>2</name>
        <sequence type="described" ref="VSP_029840"/>
    </isoform>
</comment>
<comment type="miscellaneous">
    <molecule>Isoform 2</molecule>
    <text evidence="3">Incomplete sequence.</text>
</comment>
<comment type="similarity">
    <text evidence="3">Belongs to the class-I pyridoxal-phosphate-dependent aminotransferase family. Alanine aminotransferase subfamily.</text>
</comment>
<comment type="sequence caution" evidence="3">
    <conflict type="erroneous gene model prediction">
        <sequence resource="EMBL-CDS" id="CAM14165"/>
    </conflict>
</comment>
<accession>Q6NYL5</accession>
<accession>A2BII0</accession>
<proteinExistence type="evidence at transcript level"/>
<organism>
    <name type="scientific">Danio rerio</name>
    <name type="common">Zebrafish</name>
    <name type="synonym">Brachydanio rerio</name>
    <dbReference type="NCBI Taxonomy" id="7955"/>
    <lineage>
        <taxon>Eukaryota</taxon>
        <taxon>Metazoa</taxon>
        <taxon>Chordata</taxon>
        <taxon>Craniata</taxon>
        <taxon>Vertebrata</taxon>
        <taxon>Euteleostomi</taxon>
        <taxon>Actinopterygii</taxon>
        <taxon>Neopterygii</taxon>
        <taxon>Teleostei</taxon>
        <taxon>Ostariophysi</taxon>
        <taxon>Cypriniformes</taxon>
        <taxon>Danionidae</taxon>
        <taxon>Danioninae</taxon>
        <taxon>Danio</taxon>
    </lineage>
</organism>
<reference key="1">
    <citation type="journal article" date="2013" name="Nature">
        <title>The zebrafish reference genome sequence and its relationship to the human genome.</title>
        <authorList>
            <person name="Howe K."/>
            <person name="Clark M.D."/>
            <person name="Torroja C.F."/>
            <person name="Torrance J."/>
            <person name="Berthelot C."/>
            <person name="Muffato M."/>
            <person name="Collins J.E."/>
            <person name="Humphray S."/>
            <person name="McLaren K."/>
            <person name="Matthews L."/>
            <person name="McLaren S."/>
            <person name="Sealy I."/>
            <person name="Caccamo M."/>
            <person name="Churcher C."/>
            <person name="Scott C."/>
            <person name="Barrett J.C."/>
            <person name="Koch R."/>
            <person name="Rauch G.J."/>
            <person name="White S."/>
            <person name="Chow W."/>
            <person name="Kilian B."/>
            <person name="Quintais L.T."/>
            <person name="Guerra-Assuncao J.A."/>
            <person name="Zhou Y."/>
            <person name="Gu Y."/>
            <person name="Yen J."/>
            <person name="Vogel J.H."/>
            <person name="Eyre T."/>
            <person name="Redmond S."/>
            <person name="Banerjee R."/>
            <person name="Chi J."/>
            <person name="Fu B."/>
            <person name="Langley E."/>
            <person name="Maguire S.F."/>
            <person name="Laird G.K."/>
            <person name="Lloyd D."/>
            <person name="Kenyon E."/>
            <person name="Donaldson S."/>
            <person name="Sehra H."/>
            <person name="Almeida-King J."/>
            <person name="Loveland J."/>
            <person name="Trevanion S."/>
            <person name="Jones M."/>
            <person name="Quail M."/>
            <person name="Willey D."/>
            <person name="Hunt A."/>
            <person name="Burton J."/>
            <person name="Sims S."/>
            <person name="McLay K."/>
            <person name="Plumb B."/>
            <person name="Davis J."/>
            <person name="Clee C."/>
            <person name="Oliver K."/>
            <person name="Clark R."/>
            <person name="Riddle C."/>
            <person name="Elliot D."/>
            <person name="Threadgold G."/>
            <person name="Harden G."/>
            <person name="Ware D."/>
            <person name="Begum S."/>
            <person name="Mortimore B."/>
            <person name="Kerry G."/>
            <person name="Heath P."/>
            <person name="Phillimore B."/>
            <person name="Tracey A."/>
            <person name="Corby N."/>
            <person name="Dunn M."/>
            <person name="Johnson C."/>
            <person name="Wood J."/>
            <person name="Clark S."/>
            <person name="Pelan S."/>
            <person name="Griffiths G."/>
            <person name="Smith M."/>
            <person name="Glithero R."/>
            <person name="Howden P."/>
            <person name="Barker N."/>
            <person name="Lloyd C."/>
            <person name="Stevens C."/>
            <person name="Harley J."/>
            <person name="Holt K."/>
            <person name="Panagiotidis G."/>
            <person name="Lovell J."/>
            <person name="Beasley H."/>
            <person name="Henderson C."/>
            <person name="Gordon D."/>
            <person name="Auger K."/>
            <person name="Wright D."/>
            <person name="Collins J."/>
            <person name="Raisen C."/>
            <person name="Dyer L."/>
            <person name="Leung K."/>
            <person name="Robertson L."/>
            <person name="Ambridge K."/>
            <person name="Leongamornlert D."/>
            <person name="McGuire S."/>
            <person name="Gilderthorp R."/>
            <person name="Griffiths C."/>
            <person name="Manthravadi D."/>
            <person name="Nichol S."/>
            <person name="Barker G."/>
            <person name="Whitehead S."/>
            <person name="Kay M."/>
            <person name="Brown J."/>
            <person name="Murnane C."/>
            <person name="Gray E."/>
            <person name="Humphries M."/>
            <person name="Sycamore N."/>
            <person name="Barker D."/>
            <person name="Saunders D."/>
            <person name="Wallis J."/>
            <person name="Babbage A."/>
            <person name="Hammond S."/>
            <person name="Mashreghi-Mohammadi M."/>
            <person name="Barr L."/>
            <person name="Martin S."/>
            <person name="Wray P."/>
            <person name="Ellington A."/>
            <person name="Matthews N."/>
            <person name="Ellwood M."/>
            <person name="Woodmansey R."/>
            <person name="Clark G."/>
            <person name="Cooper J."/>
            <person name="Tromans A."/>
            <person name="Grafham D."/>
            <person name="Skuce C."/>
            <person name="Pandian R."/>
            <person name="Andrews R."/>
            <person name="Harrison E."/>
            <person name="Kimberley A."/>
            <person name="Garnett J."/>
            <person name="Fosker N."/>
            <person name="Hall R."/>
            <person name="Garner P."/>
            <person name="Kelly D."/>
            <person name="Bird C."/>
            <person name="Palmer S."/>
            <person name="Gehring I."/>
            <person name="Berger A."/>
            <person name="Dooley C.M."/>
            <person name="Ersan-Urun Z."/>
            <person name="Eser C."/>
            <person name="Geiger H."/>
            <person name="Geisler M."/>
            <person name="Karotki L."/>
            <person name="Kirn A."/>
            <person name="Konantz J."/>
            <person name="Konantz M."/>
            <person name="Oberlander M."/>
            <person name="Rudolph-Geiger S."/>
            <person name="Teucke M."/>
            <person name="Lanz C."/>
            <person name="Raddatz G."/>
            <person name="Osoegawa K."/>
            <person name="Zhu B."/>
            <person name="Rapp A."/>
            <person name="Widaa S."/>
            <person name="Langford C."/>
            <person name="Yang F."/>
            <person name="Schuster S.C."/>
            <person name="Carter N.P."/>
            <person name="Harrow J."/>
            <person name="Ning Z."/>
            <person name="Herrero J."/>
            <person name="Searle S.M."/>
            <person name="Enright A."/>
            <person name="Geisler R."/>
            <person name="Plasterk R.H."/>
            <person name="Lee C."/>
            <person name="Westerfield M."/>
            <person name="de Jong P.J."/>
            <person name="Zon L.I."/>
            <person name="Postlethwait J.H."/>
            <person name="Nusslein-Volhard C."/>
            <person name="Hubbard T.J."/>
            <person name="Roest Crollius H."/>
            <person name="Rogers J."/>
            <person name="Stemple D.L."/>
        </authorList>
    </citation>
    <scope>NUCLEOTIDE SEQUENCE [LARGE SCALE GENOMIC DNA]</scope>
    <source>
        <strain>Tuebingen</strain>
    </source>
</reference>
<reference key="2">
    <citation type="submission" date="2004-02" db="EMBL/GenBank/DDBJ databases">
        <authorList>
            <consortium name="NIH - Zebrafish Gene Collection (ZGC) project"/>
        </authorList>
    </citation>
    <scope>NUCLEOTIDE SEQUENCE [LARGE SCALE MRNA] (ISOFORM 2)</scope>
    <source>
        <tissue>Kidney</tissue>
    </source>
</reference>
<evidence type="ECO:0000250" key="1"/>
<evidence type="ECO:0000303" key="2">
    <source ref="2"/>
</evidence>
<evidence type="ECO:0000305" key="3"/>
<feature type="chain" id="PRO_0000247534" description="Alanine aminotransferase 2-like">
    <location>
        <begin position="1"/>
        <end position="549"/>
    </location>
</feature>
<feature type="modified residue" description="N6-(pyridoxal phosphate)lysine" evidence="1">
    <location>
        <position position="367"/>
    </location>
</feature>
<feature type="splice variant" id="VSP_029840" description="In isoform 2." evidence="2">
    <original>MLSKRSLRVLKWGRCEAAYAAAYPKVPDWVLNFSPLPSLSSPHR</original>
    <variation>ADLSLLSVVSATEEAPLLHFW</variation>
    <location>
        <begin position="1"/>
        <end position="44"/>
    </location>
</feature>
<feature type="sequence conflict" description="In Ref. 2; AAH66543/AAH61955." evidence="3" ref="2">
    <original>M</original>
    <variation>L</variation>
    <location>
        <position position="57"/>
    </location>
</feature>
<protein>
    <recommendedName>
        <fullName>Alanine aminotransferase 2-like</fullName>
        <shortName>ALT2</shortName>
        <ecNumber>2.6.1.2</ecNumber>
    </recommendedName>
    <alternativeName>
        <fullName>Glutamate pyruvate transaminase 2</fullName>
        <shortName>GPT 2</shortName>
    </alternativeName>
    <alternativeName>
        <fullName>Glutamic--alanine transaminase 2</fullName>
    </alternativeName>
    <alternativeName>
        <fullName>Glutamic--pyruvic transaminase 2</fullName>
    </alternativeName>
</protein>
<name>ALAT2_DANRE</name>
<sequence>MLSKRSLRVLKWGRCEAAYAAAYPKVPDWVLNFSPLPSLSSPHRDFSAFPAAQSEHMQQKMSENGAIPRQGKVLTVDTMNANVKKVDYAVRGPIVQRAVQIEKELKEGVKKPFDEVIKANIGDAHAMGQRPITFFRQVMALCTYPQLLDDNKFPEDAKNRARRILQSCGGNSIGAYTTSQGIDCVRQDVAKYIERRDGGIPSDPDNIYLTTGASDGIVTILKLLTAGEGLTRTGVMISIPQYPLYSASIAELGAVQINYYLNEEKCWSLDISELQRSLQAARKHCNPRVLCIINPGNPTGQVQSRQCIEDVIQFAAKENLFLMADEVYQDNVYAKGCEFHSFKKVLFEMGPEYSKKVELASFHSTSKCYMGECGFRGGYMEVINMDADVKAQLTKLVSVRLCPPAPGQALMDLVVNPPQPGEPSHQTFMQERTAVLSALAEKAKLTEQILNTVPGISCNPVQGAMYSFPRITLPERAISEAKAKGQAPDMFYCMKLLEETGICLVPGSGFGQREGTYHFRMTILPPTDKLKLMLNKLKDFHQRFTQQYS</sequence>
<gene>
    <name type="primary">gpt2l</name>
    <name type="synonym">gpt2</name>
    <name type="ORF">im:6791811</name>
    <name type="ORF">si:ch211-261f3.4</name>
</gene>